<organism>
    <name type="scientific">Saccharomyces cerevisiae</name>
    <name type="common">Baker's yeast</name>
    <dbReference type="NCBI Taxonomy" id="4932"/>
    <lineage>
        <taxon>Eukaryota</taxon>
        <taxon>Fungi</taxon>
        <taxon>Dikarya</taxon>
        <taxon>Ascomycota</taxon>
        <taxon>Saccharomycotina</taxon>
        <taxon>Saccharomycetes</taxon>
        <taxon>Saccharomycetales</taxon>
        <taxon>Saccharomycetaceae</taxon>
        <taxon>Saccharomyces</taxon>
    </lineage>
</organism>
<dbReference type="EC" id="4.3.1.17"/>
<dbReference type="EMBL" id="X52657">
    <property type="protein sequence ID" value="CAA36883.1"/>
    <property type="molecule type" value="Genomic_DNA"/>
</dbReference>
<dbReference type="PIR" id="S12731">
    <property type="entry name" value="S12731"/>
</dbReference>
<dbReference type="SMR" id="P0CF23"/>
<dbReference type="IntAct" id="P0CF23">
    <property type="interactions" value="2"/>
</dbReference>
<dbReference type="VEuPathDB" id="FungiDB:YCL064C"/>
<dbReference type="UniPathway" id="UPA00138"/>
<dbReference type="GO" id="GO:0005737">
    <property type="term" value="C:cytoplasm"/>
    <property type="evidence" value="ECO:0007669"/>
    <property type="project" value="UniProtKB-SubCell"/>
</dbReference>
<dbReference type="GO" id="GO:0003941">
    <property type="term" value="F:L-serine ammonia-lyase activity"/>
    <property type="evidence" value="ECO:0007669"/>
    <property type="project" value="UniProtKB-EC"/>
</dbReference>
<dbReference type="GO" id="GO:0030170">
    <property type="term" value="F:pyridoxal phosphate binding"/>
    <property type="evidence" value="ECO:0007669"/>
    <property type="project" value="InterPro"/>
</dbReference>
<dbReference type="GO" id="GO:0004794">
    <property type="term" value="F:threonine deaminase activity"/>
    <property type="evidence" value="ECO:0007669"/>
    <property type="project" value="TreeGrafter"/>
</dbReference>
<dbReference type="GO" id="GO:0006094">
    <property type="term" value="P:gluconeogenesis"/>
    <property type="evidence" value="ECO:0007669"/>
    <property type="project" value="UniProtKB-UniPathway"/>
</dbReference>
<dbReference type="GO" id="GO:0009097">
    <property type="term" value="P:isoleucine biosynthetic process"/>
    <property type="evidence" value="ECO:0007669"/>
    <property type="project" value="TreeGrafter"/>
</dbReference>
<dbReference type="GO" id="GO:0006565">
    <property type="term" value="P:L-serine catabolic process"/>
    <property type="evidence" value="ECO:0007669"/>
    <property type="project" value="TreeGrafter"/>
</dbReference>
<dbReference type="GO" id="GO:0006567">
    <property type="term" value="P:threonine catabolic process"/>
    <property type="evidence" value="ECO:0007669"/>
    <property type="project" value="TreeGrafter"/>
</dbReference>
<dbReference type="CDD" id="cd06448">
    <property type="entry name" value="L-Ser-dehyd"/>
    <property type="match status" value="1"/>
</dbReference>
<dbReference type="FunFam" id="3.40.50.1100:FF:000068">
    <property type="entry name" value="Catabolic L-serine/threonine dehydratase"/>
    <property type="match status" value="1"/>
</dbReference>
<dbReference type="FunFam" id="3.40.50.1100:FF:000040">
    <property type="entry name" value="L-serine dehydratase, putative"/>
    <property type="match status" value="1"/>
</dbReference>
<dbReference type="Gene3D" id="3.40.50.1100">
    <property type="match status" value="2"/>
</dbReference>
<dbReference type="InterPro" id="IPR050147">
    <property type="entry name" value="Ser/Thr_Dehydratase"/>
</dbReference>
<dbReference type="InterPro" id="IPR000634">
    <property type="entry name" value="Ser/Thr_deHydtase_PyrdxlP-BS"/>
</dbReference>
<dbReference type="InterPro" id="IPR001926">
    <property type="entry name" value="TrpB-like_PALP"/>
</dbReference>
<dbReference type="InterPro" id="IPR036052">
    <property type="entry name" value="TrpB-like_PALP_sf"/>
</dbReference>
<dbReference type="PANTHER" id="PTHR48078:SF2">
    <property type="entry name" value="CATABOLIC L-SERINE_THREONINE DEHYDRATASE"/>
    <property type="match status" value="1"/>
</dbReference>
<dbReference type="PANTHER" id="PTHR48078">
    <property type="entry name" value="THREONINE DEHYDRATASE, MITOCHONDRIAL-RELATED"/>
    <property type="match status" value="1"/>
</dbReference>
<dbReference type="Pfam" id="PF00291">
    <property type="entry name" value="PALP"/>
    <property type="match status" value="1"/>
</dbReference>
<dbReference type="SUPFAM" id="SSF53686">
    <property type="entry name" value="Tryptophan synthase beta subunit-like PLP-dependent enzymes"/>
    <property type="match status" value="1"/>
</dbReference>
<dbReference type="PROSITE" id="PS00165">
    <property type="entry name" value="DEHYDRATASE_SER_THR"/>
    <property type="match status" value="1"/>
</dbReference>
<comment type="catalytic activity">
    <reaction>
        <text>L-serine = pyruvate + NH4(+)</text>
        <dbReference type="Rhea" id="RHEA:19169"/>
        <dbReference type="ChEBI" id="CHEBI:15361"/>
        <dbReference type="ChEBI" id="CHEBI:28938"/>
        <dbReference type="ChEBI" id="CHEBI:33384"/>
        <dbReference type="EC" id="4.3.1.17"/>
    </reaction>
</comment>
<comment type="cofactor">
    <cofactor evidence="1">
        <name>pyridoxal 5'-phosphate</name>
        <dbReference type="ChEBI" id="CHEBI:597326"/>
    </cofactor>
</comment>
<comment type="pathway">
    <text>Carbohydrate biosynthesis; gluconeogenesis.</text>
</comment>
<comment type="subcellular location">
    <subcellularLocation>
        <location evidence="1">Cytoplasm</location>
    </subcellularLocation>
</comment>
<comment type="similarity">
    <text evidence="2">Belongs to the serine/threonine dehydratase family.</text>
</comment>
<protein>
    <recommendedName>
        <fullName>L-serine dehydratase</fullName>
        <ecNumber>4.3.1.17</ecNumber>
    </recommendedName>
    <alternativeName>
        <fullName>L-serine deaminase</fullName>
    </alternativeName>
</protein>
<sequence length="338" mass="36824">MEMTHYEKTPLIRQVFNNGKTNSWFYVKHEILQPGGSFKSRGIGHLIRKSNQQPLSEGSGKLAVFSSSGGNAGLAAATACRSMALNCSVVVPKTTKPRMVKKIQSAGAKVIIHGDHWGEADEYLRHKLMAQESQHGSKTLYVHPFDNETIWEGHSTIVDEIIEQLKENDISLPRVKALVCSVGGGGLFSGIIKGLDRNHLAEKIPVVAVETAGCDVLNKSLKKGSPVTLEKLTSVATSLASPYIASFAFESFNKYGCKSVVLSDQDVLATCLRYADDYNFIVEPACGASLHLCYHPEILEDILEQKIYEDDIVIIIACGGSCMTYEDLVKASSTLNVS</sequence>
<evidence type="ECO:0000250" key="1"/>
<evidence type="ECO:0000305" key="2"/>
<name>SDH1_YEASX</name>
<accession>P0CF23</accession>
<accession>P17324</accession>
<accession>P40443</accession>
<accession>P40444</accession>
<accession>Q6Q579</accession>
<reference key="1">
    <citation type="journal article" date="1990" name="Nucleic Acids Res.">
        <title>Nucleotide sequence of the yeast SDH1 gene encoding a serine dehydratase homolog.</title>
        <authorList>
            <person name="Seufert W."/>
        </authorList>
    </citation>
    <scope>NUCLEOTIDE SEQUENCE [GENOMIC DNA]</scope>
</reference>
<proteinExistence type="inferred from homology"/>
<keyword id="KW-0963">Cytoplasm</keyword>
<keyword id="KW-0312">Gluconeogenesis</keyword>
<keyword id="KW-0456">Lyase</keyword>
<keyword id="KW-0663">Pyridoxal phosphate</keyword>
<gene>
    <name type="primary">SDL1</name>
    <name type="synonym">SDH1</name>
</gene>
<feature type="chain" id="PRO_0000185597" description="L-serine dehydratase">
    <location>
        <begin position="1"/>
        <end position="338"/>
    </location>
</feature>
<feature type="modified residue" description="N6-(pyridoxal phosphate)lysine" evidence="1">
    <location>
        <position position="39"/>
    </location>
</feature>